<protein>
    <recommendedName>
        <fullName evidence="1">UPF0756 membrane protein RBAM_026200</fullName>
    </recommendedName>
</protein>
<sequence>MFTQANLFLLLLLAIALVAKNQSLLFAVGFLIVIKAVGLDQKLFPVIQSKGINWGVTVITIAVLVPIATGDIGFKQLGEAMKSYYAWIALGAGIAVALIAKNGLTLLENDPHITTALVIGTILAVALFGGVAVGPLIGAGIAYLAMQIVKIFTS</sequence>
<gene>
    <name type="ordered locus">RBAM_026200</name>
</gene>
<accession>A7Z7K2</accession>
<feature type="chain" id="PRO_0000388817" description="UPF0756 membrane protein RBAM_026200">
    <location>
        <begin position="1"/>
        <end position="154"/>
    </location>
</feature>
<feature type="transmembrane region" description="Helical" evidence="1">
    <location>
        <begin position="14"/>
        <end position="34"/>
    </location>
</feature>
<feature type="transmembrane region" description="Helical" evidence="1">
    <location>
        <begin position="54"/>
        <end position="74"/>
    </location>
</feature>
<feature type="transmembrane region" description="Helical" evidence="1">
    <location>
        <begin position="87"/>
        <end position="107"/>
    </location>
</feature>
<feature type="transmembrane region" description="Helical" evidence="1">
    <location>
        <begin position="117"/>
        <end position="137"/>
    </location>
</feature>
<keyword id="KW-1003">Cell membrane</keyword>
<keyword id="KW-0472">Membrane</keyword>
<keyword id="KW-0812">Transmembrane</keyword>
<keyword id="KW-1133">Transmembrane helix</keyword>
<dbReference type="EMBL" id="CP000560">
    <property type="protein sequence ID" value="ABS74978.1"/>
    <property type="molecule type" value="Genomic_DNA"/>
</dbReference>
<dbReference type="RefSeq" id="WP_003152447.1">
    <property type="nucleotide sequence ID" value="NC_009725.2"/>
</dbReference>
<dbReference type="SMR" id="A7Z7K2"/>
<dbReference type="GeneID" id="93081762"/>
<dbReference type="KEGG" id="bay:RBAM_026200"/>
<dbReference type="HOGENOM" id="CLU_125889_1_0_9"/>
<dbReference type="Proteomes" id="UP000001120">
    <property type="component" value="Chromosome"/>
</dbReference>
<dbReference type="GO" id="GO:0005886">
    <property type="term" value="C:plasma membrane"/>
    <property type="evidence" value="ECO:0007669"/>
    <property type="project" value="UniProtKB-SubCell"/>
</dbReference>
<dbReference type="HAMAP" id="MF_01874">
    <property type="entry name" value="UPF0756"/>
    <property type="match status" value="1"/>
</dbReference>
<dbReference type="InterPro" id="IPR007382">
    <property type="entry name" value="UPF0756_TM"/>
</dbReference>
<dbReference type="PANTHER" id="PTHR38452">
    <property type="entry name" value="UPF0756 MEMBRANE PROTEIN YEAL"/>
    <property type="match status" value="1"/>
</dbReference>
<dbReference type="PANTHER" id="PTHR38452:SF1">
    <property type="entry name" value="UPF0756 MEMBRANE PROTEIN YEAL"/>
    <property type="match status" value="1"/>
</dbReference>
<dbReference type="Pfam" id="PF04284">
    <property type="entry name" value="DUF441"/>
    <property type="match status" value="1"/>
</dbReference>
<organism>
    <name type="scientific">Bacillus velezensis (strain DSM 23117 / BGSC 10A6 / LMG 26770 / FZB42)</name>
    <name type="common">Bacillus amyloliquefaciens subsp. plantarum</name>
    <dbReference type="NCBI Taxonomy" id="326423"/>
    <lineage>
        <taxon>Bacteria</taxon>
        <taxon>Bacillati</taxon>
        <taxon>Bacillota</taxon>
        <taxon>Bacilli</taxon>
        <taxon>Bacillales</taxon>
        <taxon>Bacillaceae</taxon>
        <taxon>Bacillus</taxon>
        <taxon>Bacillus amyloliquefaciens group</taxon>
    </lineage>
</organism>
<proteinExistence type="inferred from homology"/>
<name>Y2620_BACVZ</name>
<reference key="1">
    <citation type="journal article" date="2007" name="Nat. Biotechnol.">
        <title>Comparative analysis of the complete genome sequence of the plant growth-promoting bacterium Bacillus amyloliquefaciens FZB42.</title>
        <authorList>
            <person name="Chen X.H."/>
            <person name="Koumoutsi A."/>
            <person name="Scholz R."/>
            <person name="Eisenreich A."/>
            <person name="Schneider K."/>
            <person name="Heinemeyer I."/>
            <person name="Morgenstern B."/>
            <person name="Voss B."/>
            <person name="Hess W.R."/>
            <person name="Reva O."/>
            <person name="Junge H."/>
            <person name="Voigt B."/>
            <person name="Jungblut P.R."/>
            <person name="Vater J."/>
            <person name="Suessmuth R."/>
            <person name="Liesegang H."/>
            <person name="Strittmatter A."/>
            <person name="Gottschalk G."/>
            <person name="Borriss R."/>
        </authorList>
    </citation>
    <scope>NUCLEOTIDE SEQUENCE [LARGE SCALE GENOMIC DNA]</scope>
    <source>
        <strain>DSM 23117 / BGSC 10A6 / LMG 26770 / FZB42</strain>
    </source>
</reference>
<comment type="subcellular location">
    <subcellularLocation>
        <location evidence="1">Cell membrane</location>
        <topology evidence="1">Multi-pass membrane protein</topology>
    </subcellularLocation>
</comment>
<comment type="similarity">
    <text evidence="1">Belongs to the UPF0756 family.</text>
</comment>
<evidence type="ECO:0000255" key="1">
    <source>
        <dbReference type="HAMAP-Rule" id="MF_01874"/>
    </source>
</evidence>